<sequence>MVKIRLHTTVSSETARKIEDLKKKHRTTSSVVEKAVDLLYTSENFSRLGDEDLLILAFIRELNFMLCAKDHYTALVEGDAERAVRESMIEMAVKYLSKKPISDLDFEELLSVVARLWNLLNRAEHAEVQKDGEKLNFVFYHDMRSKAVSELHLNLLKYLYEKYYSKKYEMQVDTITVNGFSVLFFPKDSVD</sequence>
<organism>
    <name type="scientific">Archaeoglobus fulgidus (strain ATCC 49558 / DSM 4304 / JCM 9628 / NBRC 100126 / VC-16)</name>
    <dbReference type="NCBI Taxonomy" id="224325"/>
    <lineage>
        <taxon>Archaea</taxon>
        <taxon>Methanobacteriati</taxon>
        <taxon>Methanobacteriota</taxon>
        <taxon>Archaeoglobi</taxon>
        <taxon>Archaeoglobales</taxon>
        <taxon>Archaeoglobaceae</taxon>
        <taxon>Archaeoglobus</taxon>
    </lineage>
</organism>
<feature type="chain" id="PRO_0000128083" description="Uncharacterized protein AF_2020">
    <location>
        <begin position="1"/>
        <end position="191"/>
    </location>
</feature>
<reference key="1">
    <citation type="journal article" date="1997" name="Nature">
        <title>The complete genome sequence of the hyperthermophilic, sulphate-reducing archaeon Archaeoglobus fulgidus.</title>
        <authorList>
            <person name="Klenk H.-P."/>
            <person name="Clayton R.A."/>
            <person name="Tomb J.-F."/>
            <person name="White O."/>
            <person name="Nelson K.E."/>
            <person name="Ketchum K.A."/>
            <person name="Dodson R.J."/>
            <person name="Gwinn M.L."/>
            <person name="Hickey E.K."/>
            <person name="Peterson J.D."/>
            <person name="Richardson D.L."/>
            <person name="Kerlavage A.R."/>
            <person name="Graham D.E."/>
            <person name="Kyrpides N.C."/>
            <person name="Fleischmann R.D."/>
            <person name="Quackenbush J."/>
            <person name="Lee N.H."/>
            <person name="Sutton G.G."/>
            <person name="Gill S.R."/>
            <person name="Kirkness E.F."/>
            <person name="Dougherty B.A."/>
            <person name="McKenney K."/>
            <person name="Adams M.D."/>
            <person name="Loftus B.J."/>
            <person name="Peterson S.N."/>
            <person name="Reich C.I."/>
            <person name="McNeil L.K."/>
            <person name="Badger J.H."/>
            <person name="Glodek A."/>
            <person name="Zhou L."/>
            <person name="Overbeek R."/>
            <person name="Gocayne J.D."/>
            <person name="Weidman J.F."/>
            <person name="McDonald L.A."/>
            <person name="Utterback T.R."/>
            <person name="Cotton M.D."/>
            <person name="Spriggs T."/>
            <person name="Artiach P."/>
            <person name="Kaine B.P."/>
            <person name="Sykes S.M."/>
            <person name="Sadow P.W."/>
            <person name="D'Andrea K.P."/>
            <person name="Bowman C."/>
            <person name="Fujii C."/>
            <person name="Garland S.A."/>
            <person name="Mason T.M."/>
            <person name="Olsen G.J."/>
            <person name="Fraser C.M."/>
            <person name="Smith H.O."/>
            <person name="Woese C.R."/>
            <person name="Venter J.C."/>
        </authorList>
    </citation>
    <scope>NUCLEOTIDE SEQUENCE [LARGE SCALE GENOMIC DNA]</scope>
    <source>
        <strain>ATCC 49558 / DSM 4304 / JCM 9628 / NBRC 100126 / VC-16</strain>
    </source>
</reference>
<name>Y2020_ARCFU</name>
<keyword id="KW-1185">Reference proteome</keyword>
<accession>O28259</accession>
<protein>
    <recommendedName>
        <fullName>Uncharacterized protein AF_2020</fullName>
    </recommendedName>
</protein>
<proteinExistence type="predicted"/>
<dbReference type="EMBL" id="AE000782">
    <property type="protein sequence ID" value="AAB89241.1"/>
    <property type="molecule type" value="Genomic_DNA"/>
</dbReference>
<dbReference type="PIR" id="C69502">
    <property type="entry name" value="C69502"/>
</dbReference>
<dbReference type="SMR" id="O28259"/>
<dbReference type="STRING" id="224325.AF_2020"/>
<dbReference type="PaxDb" id="224325-AF_2020"/>
<dbReference type="EnsemblBacteria" id="AAB89241">
    <property type="protein sequence ID" value="AAB89241"/>
    <property type="gene ID" value="AF_2020"/>
</dbReference>
<dbReference type="KEGG" id="afu:AF_2020"/>
<dbReference type="eggNOG" id="arCOG06817">
    <property type="taxonomic scope" value="Archaea"/>
</dbReference>
<dbReference type="HOGENOM" id="CLU_120315_0_0_2"/>
<dbReference type="OrthoDB" id="380606at2157"/>
<dbReference type="PhylomeDB" id="O28259"/>
<dbReference type="Proteomes" id="UP000002199">
    <property type="component" value="Chromosome"/>
</dbReference>
<gene>
    <name type="ordered locus">AF_2020</name>
</gene>